<comment type="catalytic activity">
    <reaction evidence="1">
        <text>GTP + H2O = 7,8-dihydroneopterin 3'-triphosphate + formate + H(+)</text>
        <dbReference type="Rhea" id="RHEA:17473"/>
        <dbReference type="ChEBI" id="CHEBI:15377"/>
        <dbReference type="ChEBI" id="CHEBI:15378"/>
        <dbReference type="ChEBI" id="CHEBI:15740"/>
        <dbReference type="ChEBI" id="CHEBI:37565"/>
        <dbReference type="ChEBI" id="CHEBI:58462"/>
        <dbReference type="EC" id="3.5.4.16"/>
    </reaction>
</comment>
<comment type="pathway">
    <text evidence="1">Cofactor biosynthesis; 7,8-dihydroneopterin triphosphate biosynthesis; 7,8-dihydroneopterin triphosphate from GTP: step 1/1.</text>
</comment>
<comment type="subunit">
    <text evidence="1">Homomer.</text>
</comment>
<comment type="similarity">
    <text evidence="1">Belongs to the GTP cyclohydrolase I family.</text>
</comment>
<dbReference type="EC" id="3.5.4.16" evidence="1"/>
<dbReference type="EMBL" id="CP000108">
    <property type="protein sequence ID" value="ABB27645.1"/>
    <property type="molecule type" value="Genomic_DNA"/>
</dbReference>
<dbReference type="SMR" id="Q3ATN0"/>
<dbReference type="STRING" id="340177.Cag_0372"/>
<dbReference type="KEGG" id="cch:Cag_0372"/>
<dbReference type="eggNOG" id="COG0302">
    <property type="taxonomic scope" value="Bacteria"/>
</dbReference>
<dbReference type="HOGENOM" id="CLU_049768_3_1_10"/>
<dbReference type="OrthoDB" id="9801207at2"/>
<dbReference type="UniPathway" id="UPA00848">
    <property type="reaction ID" value="UER00151"/>
</dbReference>
<dbReference type="GO" id="GO:0005737">
    <property type="term" value="C:cytoplasm"/>
    <property type="evidence" value="ECO:0007669"/>
    <property type="project" value="TreeGrafter"/>
</dbReference>
<dbReference type="GO" id="GO:0005525">
    <property type="term" value="F:GTP binding"/>
    <property type="evidence" value="ECO:0007669"/>
    <property type="project" value="UniProtKB-KW"/>
</dbReference>
<dbReference type="GO" id="GO:0003934">
    <property type="term" value="F:GTP cyclohydrolase I activity"/>
    <property type="evidence" value="ECO:0007669"/>
    <property type="project" value="UniProtKB-UniRule"/>
</dbReference>
<dbReference type="GO" id="GO:0008270">
    <property type="term" value="F:zinc ion binding"/>
    <property type="evidence" value="ECO:0007669"/>
    <property type="project" value="UniProtKB-UniRule"/>
</dbReference>
<dbReference type="GO" id="GO:0006730">
    <property type="term" value="P:one-carbon metabolic process"/>
    <property type="evidence" value="ECO:0007669"/>
    <property type="project" value="UniProtKB-UniRule"/>
</dbReference>
<dbReference type="GO" id="GO:0006729">
    <property type="term" value="P:tetrahydrobiopterin biosynthetic process"/>
    <property type="evidence" value="ECO:0007669"/>
    <property type="project" value="TreeGrafter"/>
</dbReference>
<dbReference type="GO" id="GO:0046654">
    <property type="term" value="P:tetrahydrofolate biosynthetic process"/>
    <property type="evidence" value="ECO:0007669"/>
    <property type="project" value="UniProtKB-UniRule"/>
</dbReference>
<dbReference type="CDD" id="cd00642">
    <property type="entry name" value="GTP_cyclohydro1"/>
    <property type="match status" value="1"/>
</dbReference>
<dbReference type="FunFam" id="1.10.286.10:FF:000003">
    <property type="entry name" value="GTP cyclohydrolase 1"/>
    <property type="match status" value="1"/>
</dbReference>
<dbReference type="FunFam" id="3.30.1130.10:FF:000001">
    <property type="entry name" value="GTP cyclohydrolase 1"/>
    <property type="match status" value="1"/>
</dbReference>
<dbReference type="Gene3D" id="1.10.286.10">
    <property type="match status" value="1"/>
</dbReference>
<dbReference type="Gene3D" id="3.30.1130.10">
    <property type="match status" value="1"/>
</dbReference>
<dbReference type="HAMAP" id="MF_00223">
    <property type="entry name" value="FolE"/>
    <property type="match status" value="1"/>
</dbReference>
<dbReference type="InterPro" id="IPR043133">
    <property type="entry name" value="GTP-CH-I_C/QueF"/>
</dbReference>
<dbReference type="InterPro" id="IPR043134">
    <property type="entry name" value="GTP-CH-I_N"/>
</dbReference>
<dbReference type="InterPro" id="IPR001474">
    <property type="entry name" value="GTP_CycHdrlase_I"/>
</dbReference>
<dbReference type="InterPro" id="IPR018234">
    <property type="entry name" value="GTP_CycHdrlase_I_CS"/>
</dbReference>
<dbReference type="InterPro" id="IPR020602">
    <property type="entry name" value="GTP_CycHdrlase_I_dom"/>
</dbReference>
<dbReference type="NCBIfam" id="TIGR00063">
    <property type="entry name" value="folE"/>
    <property type="match status" value="1"/>
</dbReference>
<dbReference type="NCBIfam" id="NF006825">
    <property type="entry name" value="PRK09347.1-2"/>
    <property type="match status" value="1"/>
</dbReference>
<dbReference type="NCBIfam" id="NF006826">
    <property type="entry name" value="PRK09347.1-3"/>
    <property type="match status" value="1"/>
</dbReference>
<dbReference type="PANTHER" id="PTHR11109:SF7">
    <property type="entry name" value="GTP CYCLOHYDROLASE 1"/>
    <property type="match status" value="1"/>
</dbReference>
<dbReference type="PANTHER" id="PTHR11109">
    <property type="entry name" value="GTP CYCLOHYDROLASE I"/>
    <property type="match status" value="1"/>
</dbReference>
<dbReference type="Pfam" id="PF01227">
    <property type="entry name" value="GTP_cyclohydroI"/>
    <property type="match status" value="1"/>
</dbReference>
<dbReference type="SUPFAM" id="SSF55620">
    <property type="entry name" value="Tetrahydrobiopterin biosynthesis enzymes-like"/>
    <property type="match status" value="1"/>
</dbReference>
<dbReference type="PROSITE" id="PS00859">
    <property type="entry name" value="GTP_CYCLOHYDROL_1_1"/>
    <property type="match status" value="1"/>
</dbReference>
<dbReference type="PROSITE" id="PS00860">
    <property type="entry name" value="GTP_CYCLOHYDROL_1_2"/>
    <property type="match status" value="1"/>
</dbReference>
<feature type="chain" id="PRO_1000078137" description="GTP cyclohydrolase 1">
    <location>
        <begin position="1"/>
        <end position="223"/>
    </location>
</feature>
<feature type="binding site" evidence="1">
    <location>
        <position position="114"/>
    </location>
    <ligand>
        <name>Zn(2+)</name>
        <dbReference type="ChEBI" id="CHEBI:29105"/>
    </ligand>
</feature>
<feature type="binding site" evidence="1">
    <location>
        <position position="117"/>
    </location>
    <ligand>
        <name>Zn(2+)</name>
        <dbReference type="ChEBI" id="CHEBI:29105"/>
    </ligand>
</feature>
<feature type="binding site" evidence="1">
    <location>
        <position position="185"/>
    </location>
    <ligand>
        <name>Zn(2+)</name>
        <dbReference type="ChEBI" id="CHEBI:29105"/>
    </ligand>
</feature>
<keyword id="KW-0342">GTP-binding</keyword>
<keyword id="KW-0378">Hydrolase</keyword>
<keyword id="KW-0479">Metal-binding</keyword>
<keyword id="KW-0547">Nucleotide-binding</keyword>
<keyword id="KW-0554">One-carbon metabolism</keyword>
<keyword id="KW-0862">Zinc</keyword>
<evidence type="ECO:0000255" key="1">
    <source>
        <dbReference type="HAMAP-Rule" id="MF_00223"/>
    </source>
</evidence>
<gene>
    <name evidence="1" type="primary">folE</name>
    <name type="ordered locus">Cag_0372</name>
</gene>
<proteinExistence type="inferred from homology"/>
<name>GCH1_CHLCH</name>
<accession>Q3ATN0</accession>
<reference key="1">
    <citation type="submission" date="2005-08" db="EMBL/GenBank/DDBJ databases">
        <title>Complete sequence of Chlorobium chlorochromatii CaD3.</title>
        <authorList>
            <consortium name="US DOE Joint Genome Institute"/>
            <person name="Copeland A."/>
            <person name="Lucas S."/>
            <person name="Lapidus A."/>
            <person name="Barry K."/>
            <person name="Detter J.C."/>
            <person name="Glavina T."/>
            <person name="Hammon N."/>
            <person name="Israni S."/>
            <person name="Pitluck S."/>
            <person name="Bryant D."/>
            <person name="Schmutz J."/>
            <person name="Larimer F."/>
            <person name="Land M."/>
            <person name="Kyrpides N."/>
            <person name="Ivanova N."/>
            <person name="Richardson P."/>
        </authorList>
    </citation>
    <scope>NUCLEOTIDE SEQUENCE [LARGE SCALE GENOMIC DNA]</scope>
    <source>
        <strain>CaD3</strain>
    </source>
</reference>
<organism>
    <name type="scientific">Chlorobium chlorochromatii (strain CaD3)</name>
    <dbReference type="NCBI Taxonomy" id="340177"/>
    <lineage>
        <taxon>Bacteria</taxon>
        <taxon>Pseudomonadati</taxon>
        <taxon>Chlorobiota</taxon>
        <taxon>Chlorobiia</taxon>
        <taxon>Chlorobiales</taxon>
        <taxon>Chlorobiaceae</taxon>
        <taxon>Chlorobium/Pelodictyon group</taxon>
        <taxon>Chlorobium</taxon>
    </lineage>
</organism>
<protein>
    <recommendedName>
        <fullName evidence="1">GTP cyclohydrolase 1</fullName>
        <ecNumber evidence="1">3.5.4.16</ecNumber>
    </recommendedName>
    <alternativeName>
        <fullName evidence="1">GTP cyclohydrolase I</fullName>
        <shortName evidence="1">GTP-CH-I</shortName>
    </alternativeName>
</protein>
<sequence length="223" mass="25103">MKQEKTPSAITENKLPFSSSNCGCGCHNDDDTLTHDDGLLTDNLESAVYTMLQNVGEDPQREGLLKTPERVARSMRFLTKGYHENPEELLQKALFTESYDEMVLVRDIDLFSMCEHHMLPFFGKAHVAYIPDGKIVGLSKLARVVEVFSRRLQVQERLTQQIRDAIQNVLNPKGVAVVIEAKHLCMVMRGVEKLNSITTTSAMSGVFMTSPSTRGEFLRLIQK</sequence>